<organism>
    <name type="scientific">Agrostis stolonifera</name>
    <name type="common">Creeping bentgrass</name>
    <dbReference type="NCBI Taxonomy" id="63632"/>
    <lineage>
        <taxon>Eukaryota</taxon>
        <taxon>Viridiplantae</taxon>
        <taxon>Streptophyta</taxon>
        <taxon>Embryophyta</taxon>
        <taxon>Tracheophyta</taxon>
        <taxon>Spermatophyta</taxon>
        <taxon>Magnoliopsida</taxon>
        <taxon>Liliopsida</taxon>
        <taxon>Poales</taxon>
        <taxon>Poaceae</taxon>
        <taxon>BOP clade</taxon>
        <taxon>Pooideae</taxon>
        <taxon>Poodae</taxon>
        <taxon>Poeae</taxon>
        <taxon>Poeae Chloroplast Group 1 (Aveneae type)</taxon>
        <taxon>Agrostidodinae</taxon>
        <taxon>Agrostidinae</taxon>
        <taxon>Agrostis</taxon>
    </lineage>
</organism>
<reference key="1">
    <citation type="journal article" date="2007" name="Theor. Appl. Genet.">
        <title>Complete chloroplast genome sequences of Hordeum vulgare, Sorghum bicolor and Agrostis stolonifera, and comparative analyses with other grass genomes.</title>
        <authorList>
            <person name="Saski C."/>
            <person name="Lee S.-B."/>
            <person name="Fjellheim S."/>
            <person name="Guda C."/>
            <person name="Jansen R.K."/>
            <person name="Luo H."/>
            <person name="Tomkins J."/>
            <person name="Rognli O.A."/>
            <person name="Daniell H."/>
            <person name="Clarke J.L."/>
        </authorList>
    </citation>
    <scope>NUCLEOTIDE SEQUENCE [LARGE SCALE GENOMIC DNA]</scope>
    <source>
        <strain>cv. Penn A-4</strain>
    </source>
</reference>
<dbReference type="EC" id="1.10.3.9" evidence="2"/>
<dbReference type="EMBL" id="EF115543">
    <property type="protein sequence ID" value="ABK79565.1"/>
    <property type="molecule type" value="Genomic_DNA"/>
</dbReference>
<dbReference type="RefSeq" id="YP_874721.1">
    <property type="nucleotide sequence ID" value="NC_008591.1"/>
</dbReference>
<dbReference type="SMR" id="A1E9Z3"/>
<dbReference type="GeneID" id="4524977"/>
<dbReference type="GO" id="GO:0009535">
    <property type="term" value="C:chloroplast thylakoid membrane"/>
    <property type="evidence" value="ECO:0007669"/>
    <property type="project" value="UniProtKB-SubCell"/>
</dbReference>
<dbReference type="GO" id="GO:0009523">
    <property type="term" value="C:photosystem II"/>
    <property type="evidence" value="ECO:0007669"/>
    <property type="project" value="UniProtKB-KW"/>
</dbReference>
<dbReference type="GO" id="GO:0016168">
    <property type="term" value="F:chlorophyll binding"/>
    <property type="evidence" value="ECO:0007669"/>
    <property type="project" value="UniProtKB-UniRule"/>
</dbReference>
<dbReference type="GO" id="GO:0045156">
    <property type="term" value="F:electron transporter, transferring electrons within the cyclic electron transport pathway of photosynthesis activity"/>
    <property type="evidence" value="ECO:0007669"/>
    <property type="project" value="InterPro"/>
</dbReference>
<dbReference type="GO" id="GO:0005506">
    <property type="term" value="F:iron ion binding"/>
    <property type="evidence" value="ECO:0007669"/>
    <property type="project" value="UniProtKB-UniRule"/>
</dbReference>
<dbReference type="GO" id="GO:0010242">
    <property type="term" value="F:oxygen evolving activity"/>
    <property type="evidence" value="ECO:0007669"/>
    <property type="project" value="UniProtKB-EC"/>
</dbReference>
<dbReference type="GO" id="GO:0009772">
    <property type="term" value="P:photosynthetic electron transport in photosystem II"/>
    <property type="evidence" value="ECO:0007669"/>
    <property type="project" value="InterPro"/>
</dbReference>
<dbReference type="CDD" id="cd09288">
    <property type="entry name" value="Photosystem-II_D2"/>
    <property type="match status" value="1"/>
</dbReference>
<dbReference type="FunFam" id="1.20.85.10:FF:000001">
    <property type="entry name" value="photosystem II D2 protein-like"/>
    <property type="match status" value="1"/>
</dbReference>
<dbReference type="Gene3D" id="1.20.85.10">
    <property type="entry name" value="Photosystem II protein D1-like"/>
    <property type="match status" value="1"/>
</dbReference>
<dbReference type="HAMAP" id="MF_01383">
    <property type="entry name" value="PSII_PsbD_D2"/>
    <property type="match status" value="1"/>
</dbReference>
<dbReference type="InterPro" id="IPR055266">
    <property type="entry name" value="D1/D2"/>
</dbReference>
<dbReference type="InterPro" id="IPR036854">
    <property type="entry name" value="Photo_II_D1/D2_sf"/>
</dbReference>
<dbReference type="InterPro" id="IPR000484">
    <property type="entry name" value="Photo_RC_L/M"/>
</dbReference>
<dbReference type="InterPro" id="IPR055265">
    <property type="entry name" value="Photo_RC_L/M_CS"/>
</dbReference>
<dbReference type="InterPro" id="IPR005868">
    <property type="entry name" value="PSII_PsbD/D2"/>
</dbReference>
<dbReference type="NCBIfam" id="TIGR01152">
    <property type="entry name" value="psbD"/>
    <property type="match status" value="1"/>
</dbReference>
<dbReference type="PANTHER" id="PTHR33149:SF12">
    <property type="entry name" value="PHOTOSYSTEM II D2 PROTEIN"/>
    <property type="match status" value="1"/>
</dbReference>
<dbReference type="PANTHER" id="PTHR33149">
    <property type="entry name" value="PHOTOSYSTEM II PROTEIN D1"/>
    <property type="match status" value="1"/>
</dbReference>
<dbReference type="Pfam" id="PF00124">
    <property type="entry name" value="Photo_RC"/>
    <property type="match status" value="1"/>
</dbReference>
<dbReference type="PRINTS" id="PR00256">
    <property type="entry name" value="REACTNCENTRE"/>
</dbReference>
<dbReference type="SUPFAM" id="SSF81483">
    <property type="entry name" value="Bacterial photosystem II reaction centre, L and M subunits"/>
    <property type="match status" value="1"/>
</dbReference>
<dbReference type="PROSITE" id="PS00244">
    <property type="entry name" value="REACTION_CENTER"/>
    <property type="match status" value="1"/>
</dbReference>
<evidence type="ECO:0000250" key="1">
    <source>
        <dbReference type="UniProtKB" id="P56761"/>
    </source>
</evidence>
<evidence type="ECO:0000255" key="2">
    <source>
        <dbReference type="HAMAP-Rule" id="MF_01383"/>
    </source>
</evidence>
<geneLocation type="chloroplast"/>
<name>PSBD_AGRST</name>
<keyword id="KW-0007">Acetylation</keyword>
<keyword id="KW-0148">Chlorophyll</keyword>
<keyword id="KW-0150">Chloroplast</keyword>
<keyword id="KW-0157">Chromophore</keyword>
<keyword id="KW-0249">Electron transport</keyword>
<keyword id="KW-0408">Iron</keyword>
<keyword id="KW-0460">Magnesium</keyword>
<keyword id="KW-0472">Membrane</keyword>
<keyword id="KW-0479">Metal-binding</keyword>
<keyword id="KW-0560">Oxidoreductase</keyword>
<keyword id="KW-0597">Phosphoprotein</keyword>
<keyword id="KW-0602">Photosynthesis</keyword>
<keyword id="KW-0604">Photosystem II</keyword>
<keyword id="KW-0934">Plastid</keyword>
<keyword id="KW-0793">Thylakoid</keyword>
<keyword id="KW-0812">Transmembrane</keyword>
<keyword id="KW-1133">Transmembrane helix</keyword>
<keyword id="KW-0813">Transport</keyword>
<sequence length="353" mass="39557">MTIALGRVPKEENDLFDTMDDWLRRDRFVFVGWSGLLLFPCAYFALGGWFTGTTFVTSWYTHGLASSYLEGCNFLTAAVSTPANSLAHSLLLLWGPEAQGDFTRWCQLGGLWTFVALHGAFALIGFMLRQFELARSVQLRPYNAISFSGPIAVFVSVFLIYPLGQSGWFFAPSFGVAAIFRFILFFQGFHNWTLNPFHMMGVAGVLGAALLCAIHGATVENTLFEDGDGANTFRAFNPTQAEETYSMVTANRFWSQIFGVAFSNKRWLHFFMLFVPVTGLWMSAIGVVGLALNLRAYDFVSQEIRAAEDPEFETFYTKNILLNEGIRAWMAAQDQPHENLIFPEEVLPRGNAL</sequence>
<proteinExistence type="inferred from homology"/>
<feature type="initiator methionine" description="Removed" evidence="1">
    <location>
        <position position="1"/>
    </location>
</feature>
<feature type="chain" id="PRO_0000359619" description="Photosystem II D2 protein">
    <location>
        <begin position="2"/>
        <end position="353"/>
    </location>
</feature>
<feature type="transmembrane region" description="Helical" evidence="2">
    <location>
        <begin position="41"/>
        <end position="61"/>
    </location>
</feature>
<feature type="transmembrane region" description="Helical" evidence="2">
    <location>
        <begin position="125"/>
        <end position="141"/>
    </location>
</feature>
<feature type="transmembrane region" description="Helical" evidence="2">
    <location>
        <begin position="153"/>
        <end position="166"/>
    </location>
</feature>
<feature type="transmembrane region" description="Helical" evidence="2">
    <location>
        <begin position="208"/>
        <end position="228"/>
    </location>
</feature>
<feature type="transmembrane region" description="Helical" evidence="2">
    <location>
        <begin position="279"/>
        <end position="295"/>
    </location>
</feature>
<feature type="binding site" description="axial binding residue" evidence="2">
    <location>
        <position position="118"/>
    </location>
    <ligand>
        <name>chlorophyll a</name>
        <dbReference type="ChEBI" id="CHEBI:58416"/>
        <label>ChlzD2</label>
    </ligand>
    <ligandPart>
        <name>Mg</name>
        <dbReference type="ChEBI" id="CHEBI:25107"/>
    </ligandPart>
</feature>
<feature type="binding site" evidence="2">
    <location>
        <position position="130"/>
    </location>
    <ligand>
        <name>pheophytin a</name>
        <dbReference type="ChEBI" id="CHEBI:136840"/>
        <label>D2</label>
    </ligand>
</feature>
<feature type="binding site" evidence="2">
    <location>
        <position position="143"/>
    </location>
    <ligand>
        <name>pheophytin a</name>
        <dbReference type="ChEBI" id="CHEBI:136840"/>
        <label>D2</label>
    </ligand>
</feature>
<feature type="binding site" description="axial binding residue" evidence="2">
    <location>
        <position position="198"/>
    </location>
    <ligand>
        <name>chlorophyll a</name>
        <dbReference type="ChEBI" id="CHEBI:58416"/>
        <label>PD2</label>
    </ligand>
    <ligandPart>
        <name>Mg</name>
        <dbReference type="ChEBI" id="CHEBI:25107"/>
    </ligandPart>
</feature>
<feature type="binding site" evidence="2">
    <location>
        <position position="215"/>
    </location>
    <ligand>
        <name>a plastoquinone</name>
        <dbReference type="ChEBI" id="CHEBI:17757"/>
        <label>Q(A)</label>
    </ligand>
</feature>
<feature type="binding site" evidence="2">
    <location>
        <position position="215"/>
    </location>
    <ligand>
        <name>Fe cation</name>
        <dbReference type="ChEBI" id="CHEBI:24875"/>
        <note>ligand shared with heterodimeric partner</note>
    </ligand>
</feature>
<feature type="binding site" evidence="2">
    <location>
        <position position="262"/>
    </location>
    <ligand>
        <name>a plastoquinone</name>
        <dbReference type="ChEBI" id="CHEBI:17757"/>
        <label>Q(A)</label>
    </ligand>
</feature>
<feature type="binding site" evidence="2">
    <location>
        <position position="269"/>
    </location>
    <ligand>
        <name>Fe cation</name>
        <dbReference type="ChEBI" id="CHEBI:24875"/>
        <note>ligand shared with heterodimeric partner</note>
    </ligand>
</feature>
<feature type="modified residue" description="N-acetylthreonine" evidence="1">
    <location>
        <position position="2"/>
    </location>
</feature>
<feature type="modified residue" description="Phosphothreonine" evidence="1">
    <location>
        <position position="2"/>
    </location>
</feature>
<accession>A1E9Z3</accession>
<comment type="function">
    <text evidence="2">Photosystem II (PSII) is a light-driven water:plastoquinone oxidoreductase that uses light energy to abstract electrons from H(2)O, generating O(2) and a proton gradient subsequently used for ATP formation. It consists of a core antenna complex that captures photons, and an electron transfer chain that converts photonic excitation into a charge separation. The D1/D2 (PsbA/PsbD) reaction center heterodimer binds P680, the primary electron donor of PSII as well as several subsequent electron acceptors. D2 is needed for assembly of a stable PSII complex.</text>
</comment>
<comment type="catalytic activity">
    <reaction evidence="2">
        <text>2 a plastoquinone + 4 hnu + 2 H2O = 2 a plastoquinol + O2</text>
        <dbReference type="Rhea" id="RHEA:36359"/>
        <dbReference type="Rhea" id="RHEA-COMP:9561"/>
        <dbReference type="Rhea" id="RHEA-COMP:9562"/>
        <dbReference type="ChEBI" id="CHEBI:15377"/>
        <dbReference type="ChEBI" id="CHEBI:15379"/>
        <dbReference type="ChEBI" id="CHEBI:17757"/>
        <dbReference type="ChEBI" id="CHEBI:30212"/>
        <dbReference type="ChEBI" id="CHEBI:62192"/>
        <dbReference type="EC" id="1.10.3.9"/>
    </reaction>
</comment>
<comment type="cofactor">
    <text evidence="2">The D1/D2 heterodimer binds P680, chlorophylls that are the primary electron donor of PSII, and subsequent electron acceptors. It shares a non-heme iron and each subunit binds pheophytin, quinone, additional chlorophylls, carotenoids and lipids. There is also a Cl(-1) ion associated with D1 and D2, which is required for oxygen evolution. The PSII complex binds additional chlorophylls, carotenoids and specific lipids.</text>
</comment>
<comment type="subunit">
    <text evidence="2">PSII is composed of 1 copy each of membrane proteins PsbA, PsbB, PsbC, PsbD, PsbE, PsbF, PsbH, PsbI, PsbJ, PsbK, PsbL, PsbM, PsbT, PsbX, PsbY, PsbZ, Psb30/Ycf12, at least 3 peripheral proteins of the oxygen-evolving complex and a large number of cofactors. It forms dimeric complexes.</text>
</comment>
<comment type="subcellular location">
    <subcellularLocation>
        <location evidence="2">Plastid</location>
        <location evidence="2">Chloroplast thylakoid membrane</location>
        <topology evidence="2">Multi-pass membrane protein</topology>
    </subcellularLocation>
</comment>
<comment type="miscellaneous">
    <text evidence="2">2 of the reaction center chlorophylls (ChlD1 and ChlD2) are entirely coordinated by water.</text>
</comment>
<comment type="similarity">
    <text evidence="2">Belongs to the reaction center PufL/M/PsbA/D family.</text>
</comment>
<protein>
    <recommendedName>
        <fullName evidence="2">Photosystem II D2 protein</fullName>
        <shortName evidence="2">PSII D2 protein</shortName>
        <ecNumber evidence="2">1.10.3.9</ecNumber>
    </recommendedName>
    <alternativeName>
        <fullName evidence="2">Photosystem Q(A) protein</fullName>
    </alternativeName>
</protein>
<gene>
    <name evidence="2" type="primary">psbD</name>
</gene>